<sequence length="128" mass="14519">MAYRKLGRTSSQRKAMLRDLTTDLLINESIVTTEARAKEIRKTVEKMITLGKRGDLHARRQAAAFVRNEIASENYDEATDKYTSTSALQKLFNEIAPRYAERNGGYTRILKTEPRRGDAAPMAIIELV</sequence>
<protein>
    <recommendedName>
        <fullName evidence="1">Large ribosomal subunit protein bL17</fullName>
    </recommendedName>
    <alternativeName>
        <fullName evidence="2">50S ribosomal protein L17</fullName>
    </alternativeName>
</protein>
<comment type="subunit">
    <text evidence="1">Part of the 50S ribosomal subunit. Contacts protein L32.</text>
</comment>
<comment type="similarity">
    <text evidence="1">Belongs to the bacterial ribosomal protein bL17 family.</text>
</comment>
<name>RL17_STRU0</name>
<reference key="1">
    <citation type="journal article" date="2009" name="BMC Genomics">
        <title>Evidence for niche adaptation in the genome of the bovine pathogen Streptococcus uberis.</title>
        <authorList>
            <person name="Ward P.N."/>
            <person name="Holden M.T.G."/>
            <person name="Leigh J.A."/>
            <person name="Lennard N."/>
            <person name="Bignell A."/>
            <person name="Barron A."/>
            <person name="Clark L."/>
            <person name="Quail M.A."/>
            <person name="Woodward J."/>
            <person name="Barrell B.G."/>
            <person name="Egan S.A."/>
            <person name="Field T.R."/>
            <person name="Maskell D."/>
            <person name="Kehoe M."/>
            <person name="Dowson C.G."/>
            <person name="Chanter N."/>
            <person name="Whatmore A.M."/>
            <person name="Bentley S.D."/>
            <person name="Parkhill J."/>
        </authorList>
    </citation>
    <scope>NUCLEOTIDE SEQUENCE [LARGE SCALE GENOMIC DNA]</scope>
    <source>
        <strain>ATCC BAA-854 / 0140J</strain>
    </source>
</reference>
<organism>
    <name type="scientific">Streptococcus uberis (strain ATCC BAA-854 / 0140J)</name>
    <dbReference type="NCBI Taxonomy" id="218495"/>
    <lineage>
        <taxon>Bacteria</taxon>
        <taxon>Bacillati</taxon>
        <taxon>Bacillota</taxon>
        <taxon>Bacilli</taxon>
        <taxon>Lactobacillales</taxon>
        <taxon>Streptococcaceae</taxon>
        <taxon>Streptococcus</taxon>
    </lineage>
</organism>
<proteinExistence type="inferred from homology"/>
<feature type="chain" id="PRO_1000184047" description="Large ribosomal subunit protein bL17">
    <location>
        <begin position="1"/>
        <end position="128"/>
    </location>
</feature>
<dbReference type="EMBL" id="AM946015">
    <property type="protein sequence ID" value="CAR40489.1"/>
    <property type="molecule type" value="Genomic_DNA"/>
</dbReference>
<dbReference type="RefSeq" id="WP_012657653.1">
    <property type="nucleotide sequence ID" value="NC_012004.1"/>
</dbReference>
<dbReference type="SMR" id="B9DSX7"/>
<dbReference type="STRING" id="218495.SUB0095"/>
<dbReference type="KEGG" id="sub:SUB0095"/>
<dbReference type="eggNOG" id="COG0203">
    <property type="taxonomic scope" value="Bacteria"/>
</dbReference>
<dbReference type="HOGENOM" id="CLU_074407_2_2_9"/>
<dbReference type="OrthoDB" id="9809073at2"/>
<dbReference type="Proteomes" id="UP000000449">
    <property type="component" value="Chromosome"/>
</dbReference>
<dbReference type="GO" id="GO:0022625">
    <property type="term" value="C:cytosolic large ribosomal subunit"/>
    <property type="evidence" value="ECO:0007669"/>
    <property type="project" value="TreeGrafter"/>
</dbReference>
<dbReference type="GO" id="GO:0003735">
    <property type="term" value="F:structural constituent of ribosome"/>
    <property type="evidence" value="ECO:0007669"/>
    <property type="project" value="InterPro"/>
</dbReference>
<dbReference type="GO" id="GO:0006412">
    <property type="term" value="P:translation"/>
    <property type="evidence" value="ECO:0007669"/>
    <property type="project" value="UniProtKB-UniRule"/>
</dbReference>
<dbReference type="FunFam" id="3.90.1030.10:FF:000002">
    <property type="entry name" value="50S ribosomal protein L17"/>
    <property type="match status" value="1"/>
</dbReference>
<dbReference type="Gene3D" id="3.90.1030.10">
    <property type="entry name" value="Ribosomal protein L17"/>
    <property type="match status" value="1"/>
</dbReference>
<dbReference type="HAMAP" id="MF_01368">
    <property type="entry name" value="Ribosomal_bL17"/>
    <property type="match status" value="1"/>
</dbReference>
<dbReference type="InterPro" id="IPR000456">
    <property type="entry name" value="Ribosomal_bL17"/>
</dbReference>
<dbReference type="InterPro" id="IPR047859">
    <property type="entry name" value="Ribosomal_bL17_CS"/>
</dbReference>
<dbReference type="InterPro" id="IPR036373">
    <property type="entry name" value="Ribosomal_bL17_sf"/>
</dbReference>
<dbReference type="NCBIfam" id="TIGR00059">
    <property type="entry name" value="L17"/>
    <property type="match status" value="1"/>
</dbReference>
<dbReference type="PANTHER" id="PTHR14413:SF16">
    <property type="entry name" value="LARGE RIBOSOMAL SUBUNIT PROTEIN BL17M"/>
    <property type="match status" value="1"/>
</dbReference>
<dbReference type="PANTHER" id="PTHR14413">
    <property type="entry name" value="RIBOSOMAL PROTEIN L17"/>
    <property type="match status" value="1"/>
</dbReference>
<dbReference type="Pfam" id="PF01196">
    <property type="entry name" value="Ribosomal_L17"/>
    <property type="match status" value="1"/>
</dbReference>
<dbReference type="SUPFAM" id="SSF64263">
    <property type="entry name" value="Prokaryotic ribosomal protein L17"/>
    <property type="match status" value="1"/>
</dbReference>
<dbReference type="PROSITE" id="PS01167">
    <property type="entry name" value="RIBOSOMAL_L17"/>
    <property type="match status" value="1"/>
</dbReference>
<keyword id="KW-1185">Reference proteome</keyword>
<keyword id="KW-0687">Ribonucleoprotein</keyword>
<keyword id="KW-0689">Ribosomal protein</keyword>
<gene>
    <name evidence="1" type="primary">rplQ</name>
    <name type="ordered locus">SUB0095</name>
</gene>
<accession>B9DSX7</accession>
<evidence type="ECO:0000255" key="1">
    <source>
        <dbReference type="HAMAP-Rule" id="MF_01368"/>
    </source>
</evidence>
<evidence type="ECO:0000305" key="2"/>